<protein>
    <recommendedName>
        <fullName>Mucin-like protein 1</fullName>
    </recommendedName>
    <alternativeName>
        <fullName>Protein BS106</fullName>
    </alternativeName>
    <alternativeName>
        <fullName>Small breast epithelial mucin</fullName>
    </alternativeName>
</protein>
<reference key="1">
    <citation type="journal article" date="2002" name="Cancer Res.">
        <title>Identification of a novel breast- and salivary gland-specific, mucin-like gene strongly expressed in normal and tumor human mammary epithelium.</title>
        <authorList>
            <person name="Miksicek R.J."/>
            <person name="Myal Y."/>
            <person name="Watson P.H."/>
            <person name="Walker C."/>
            <person name="Murphy L.C."/>
            <person name="Leygue E."/>
        </authorList>
    </citation>
    <scope>NUCLEOTIDE SEQUENCE [MRNA]</scope>
    <scope>REPEAT</scope>
    <scope>FUNCTION</scope>
    <scope>TISSUE SPECIFICITY</scope>
    <source>
        <tissue>Mammary gland</tissue>
        <tissue>Mammary tumor</tissue>
    </source>
</reference>
<reference key="2">
    <citation type="journal article" date="2002" name="Tumor Biol.">
        <title>Identification and immunohistochemical characterization of a mucin-like glycoprotein expressed in early stage breast carcinoma.</title>
        <authorList>
            <person name="Colpitts T.L."/>
            <person name="Billing P."/>
            <person name="Granados E."/>
            <person name="Hayden M.R."/>
            <person name="Hodges S."/>
            <person name="Roberts L."/>
            <person name="Russell J."/>
            <person name="Friedman P."/>
            <person name="Stroupe S."/>
        </authorList>
    </citation>
    <scope>NUCLEOTIDE SEQUENCE [MRNA]</scope>
    <scope>TISSUE SPECIFICITY</scope>
    <scope>FUNCTION</scope>
    <scope>GLYCOSYLATION</scope>
</reference>
<reference key="3">
    <citation type="journal article" date="2005" name="Int. J. Cancer">
        <title>Serological identification of breast cancer-related antigens from a Saccharomyces cerevisiae surface display library.</title>
        <authorList>
            <person name="Wadle A."/>
            <person name="Mischo A."/>
            <person name="Imig J."/>
            <person name="Wullner B."/>
            <person name="Hensel D."/>
            <person name="Watzig K."/>
            <person name="Neumann F."/>
            <person name="Kubuschok B."/>
            <person name="Schmidt W."/>
            <person name="Old L.J."/>
            <person name="Pfreundschuh M."/>
            <person name="Renner C."/>
        </authorList>
    </citation>
    <scope>NUCLEOTIDE SEQUENCE [MRNA]</scope>
    <scope>SUBCELLULAR LOCATION</scope>
    <scope>REPEAT</scope>
    <scope>VARIANT 46-THR--ALA-53 DEL</scope>
</reference>
<reference key="4">
    <citation type="journal article" date="2003" name="Genome Res.">
        <title>The secreted protein discovery initiative (SPDI), a large-scale effort to identify novel human secreted and transmembrane proteins: a bioinformatics assessment.</title>
        <authorList>
            <person name="Clark H.F."/>
            <person name="Gurney A.L."/>
            <person name="Abaya E."/>
            <person name="Baker K."/>
            <person name="Baldwin D.T."/>
            <person name="Brush J."/>
            <person name="Chen J."/>
            <person name="Chow B."/>
            <person name="Chui C."/>
            <person name="Crowley C."/>
            <person name="Currell B."/>
            <person name="Deuel B."/>
            <person name="Dowd P."/>
            <person name="Eaton D."/>
            <person name="Foster J.S."/>
            <person name="Grimaldi C."/>
            <person name="Gu Q."/>
            <person name="Hass P.E."/>
            <person name="Heldens S."/>
            <person name="Huang A."/>
            <person name="Kim H.S."/>
            <person name="Klimowski L."/>
            <person name="Jin Y."/>
            <person name="Johnson S."/>
            <person name="Lee J."/>
            <person name="Lewis L."/>
            <person name="Liao D."/>
            <person name="Mark M.R."/>
            <person name="Robbie E."/>
            <person name="Sanchez C."/>
            <person name="Schoenfeld J."/>
            <person name="Seshagiri S."/>
            <person name="Simmons L."/>
            <person name="Singh J."/>
            <person name="Smith V."/>
            <person name="Stinson J."/>
            <person name="Vagts A."/>
            <person name="Vandlen R.L."/>
            <person name="Watanabe C."/>
            <person name="Wieand D."/>
            <person name="Woods K."/>
            <person name="Xie M.-H."/>
            <person name="Yansura D.G."/>
            <person name="Yi S."/>
            <person name="Yu G."/>
            <person name="Yuan J."/>
            <person name="Zhang M."/>
            <person name="Zhang Z."/>
            <person name="Goddard A.D."/>
            <person name="Wood W.I."/>
            <person name="Godowski P.J."/>
            <person name="Gray A.M."/>
        </authorList>
    </citation>
    <scope>NUCLEOTIDE SEQUENCE [LARGE SCALE MRNA]</scope>
</reference>
<reference key="5">
    <citation type="journal article" date="2004" name="Genome Res.">
        <title>The status, quality, and expansion of the NIH full-length cDNA project: the Mammalian Gene Collection (MGC).</title>
        <authorList>
            <consortium name="The MGC Project Team"/>
        </authorList>
    </citation>
    <scope>NUCLEOTIDE SEQUENCE [LARGE SCALE MRNA]</scope>
</reference>
<reference key="6">
    <citation type="journal article" date="2004" name="Protein Sci.">
        <title>Signal peptide prediction based on analysis of experimentally verified cleavage sites.</title>
        <authorList>
            <person name="Zhang Z."/>
            <person name="Henzel W.J."/>
        </authorList>
    </citation>
    <scope>PROTEIN SEQUENCE OF 21-35</scope>
</reference>
<reference key="7">
    <citation type="journal article" date="2004" name="DNA Cell Biol.">
        <title>Human small breast epithelial mucin: the promise of a new breast tumor biomarker.</title>
        <authorList>
            <person name="Hube F."/>
            <person name="Mutawe M."/>
            <person name="Leygue E."/>
            <person name="Myal Y."/>
        </authorList>
    </citation>
    <scope>FUNCTION</scope>
</reference>
<reference key="8">
    <citation type="journal article" date="2004" name="J. Mol. Diagn.">
        <title>Identification of MGB1 as a marker in the differential diagnosis of lung tumors in patients with a history of breast cancer by analysis of publicly available SAGE data.</title>
        <authorList>
            <person name="Koga T."/>
            <person name="Horio Y."/>
            <person name="Mitsudomi T."/>
            <person name="Takahashi T."/>
            <person name="Yatabe Y."/>
        </authorList>
    </citation>
    <scope>TISSUE SPECIFICITY</scope>
</reference>
<organism>
    <name type="scientific">Homo sapiens</name>
    <name type="common">Human</name>
    <dbReference type="NCBI Taxonomy" id="9606"/>
    <lineage>
        <taxon>Eukaryota</taxon>
        <taxon>Metazoa</taxon>
        <taxon>Chordata</taxon>
        <taxon>Craniata</taxon>
        <taxon>Vertebrata</taxon>
        <taxon>Euteleostomi</taxon>
        <taxon>Mammalia</taxon>
        <taxon>Eutheria</taxon>
        <taxon>Euarchontoglires</taxon>
        <taxon>Primates</taxon>
        <taxon>Haplorrhini</taxon>
        <taxon>Catarrhini</taxon>
        <taxon>Hominidae</taxon>
        <taxon>Homo</taxon>
    </lineage>
</organism>
<dbReference type="EMBL" id="AF414087">
    <property type="protein sequence ID" value="AAL02119.1"/>
    <property type="molecule type" value="mRNA"/>
</dbReference>
<dbReference type="EMBL" id="AY651259">
    <property type="protein sequence ID" value="AAT72303.1"/>
    <property type="molecule type" value="mRNA"/>
</dbReference>
<dbReference type="EMBL" id="AY359062">
    <property type="protein sequence ID" value="AAQ89421.1"/>
    <property type="molecule type" value="mRNA"/>
</dbReference>
<dbReference type="EMBL" id="BC111421">
    <property type="protein sequence ID" value="AAI11422.1"/>
    <property type="molecule type" value="mRNA"/>
</dbReference>
<dbReference type="CCDS" id="CCDS8885.1"/>
<dbReference type="RefSeq" id="NP_477521.1">
    <property type="nucleotide sequence ID" value="NM_058173.3"/>
</dbReference>
<dbReference type="RefSeq" id="XP_047284228.1">
    <property type="nucleotide sequence ID" value="XM_047428272.1"/>
</dbReference>
<dbReference type="BioGRID" id="125603">
    <property type="interactions" value="56"/>
</dbReference>
<dbReference type="FunCoup" id="Q96DR8">
    <property type="interactions" value="97"/>
</dbReference>
<dbReference type="IntAct" id="Q96DR8">
    <property type="interactions" value="23"/>
</dbReference>
<dbReference type="MINT" id="Q96DR8"/>
<dbReference type="STRING" id="9606.ENSP00000311364"/>
<dbReference type="GlyCosmos" id="Q96DR8">
    <property type="glycosylation" value="17 sites, No reported glycans"/>
</dbReference>
<dbReference type="GlyGen" id="Q96DR8">
    <property type="glycosylation" value="18 sites, 1 O-linked glycan (1 site)"/>
</dbReference>
<dbReference type="iPTMnet" id="Q96DR8"/>
<dbReference type="PhosphoSitePlus" id="Q96DR8"/>
<dbReference type="BioMuta" id="MUCL1"/>
<dbReference type="DMDM" id="74731497"/>
<dbReference type="MassIVE" id="Q96DR8"/>
<dbReference type="PaxDb" id="9606-ENSP00000311364"/>
<dbReference type="PeptideAtlas" id="Q96DR8"/>
<dbReference type="ProteomicsDB" id="76309"/>
<dbReference type="Antibodypedia" id="48436">
    <property type="antibodies" value="50 antibodies from 10 providers"/>
</dbReference>
<dbReference type="DNASU" id="118430"/>
<dbReference type="Ensembl" id="ENST00000308796.11">
    <property type="protein sequence ID" value="ENSP00000311364.5"/>
    <property type="gene ID" value="ENSG00000172551.12"/>
</dbReference>
<dbReference type="GeneID" id="118430"/>
<dbReference type="KEGG" id="hsa:118430"/>
<dbReference type="MANE-Select" id="ENST00000308796.11">
    <property type="protein sequence ID" value="ENSP00000311364.5"/>
    <property type="RefSeq nucleotide sequence ID" value="NM_058173.3"/>
    <property type="RefSeq protein sequence ID" value="NP_477521.1"/>
</dbReference>
<dbReference type="UCSC" id="uc001sgk.4">
    <property type="organism name" value="human"/>
</dbReference>
<dbReference type="AGR" id="HGNC:30588"/>
<dbReference type="CTD" id="118430"/>
<dbReference type="DisGeNET" id="118430"/>
<dbReference type="GeneCards" id="MUCL1"/>
<dbReference type="HGNC" id="HGNC:30588">
    <property type="gene designation" value="MUCL1"/>
</dbReference>
<dbReference type="HPA" id="ENSG00000172551">
    <property type="expression patterns" value="Tissue enriched (breast)"/>
</dbReference>
<dbReference type="MIM" id="610857">
    <property type="type" value="gene"/>
</dbReference>
<dbReference type="neXtProt" id="NX_Q96DR8"/>
<dbReference type="OpenTargets" id="ENSG00000172551"/>
<dbReference type="PharmGKB" id="PA162396316"/>
<dbReference type="VEuPathDB" id="HostDB:ENSG00000172551"/>
<dbReference type="eggNOG" id="ENOG502TEGX">
    <property type="taxonomic scope" value="Eukaryota"/>
</dbReference>
<dbReference type="GeneTree" id="ENSGT01050000245407"/>
<dbReference type="HOGENOM" id="CLU_2589061_0_0_1"/>
<dbReference type="InParanoid" id="Q96DR8"/>
<dbReference type="OMA" id="ACHHIRV"/>
<dbReference type="PAN-GO" id="Q96DR8">
    <property type="GO annotations" value="0 GO annotations based on evolutionary models"/>
</dbReference>
<dbReference type="PhylomeDB" id="Q96DR8"/>
<dbReference type="TreeFam" id="TF341044"/>
<dbReference type="PathwayCommons" id="Q96DR8"/>
<dbReference type="Reactome" id="R-HSA-5083625">
    <property type="pathway name" value="Defective GALNT3 causes HFTC"/>
</dbReference>
<dbReference type="Reactome" id="R-HSA-5083632">
    <property type="pathway name" value="Defective C1GALT1C1 causes TNPS"/>
</dbReference>
<dbReference type="Reactome" id="R-HSA-5083636">
    <property type="pathway name" value="Defective GALNT12 causes CRCS1"/>
</dbReference>
<dbReference type="Reactome" id="R-HSA-5621480">
    <property type="pathway name" value="Dectin-2 family"/>
</dbReference>
<dbReference type="Reactome" id="R-HSA-913709">
    <property type="pathway name" value="O-linked glycosylation of mucins"/>
</dbReference>
<dbReference type="Reactome" id="R-HSA-977068">
    <property type="pathway name" value="Termination of O-glycan biosynthesis"/>
</dbReference>
<dbReference type="SignaLink" id="Q96DR8"/>
<dbReference type="BioGRID-ORCS" id="118430">
    <property type="hits" value="12 hits in 1141 CRISPR screens"/>
</dbReference>
<dbReference type="GeneWiki" id="MUCL1"/>
<dbReference type="GenomeRNAi" id="118430"/>
<dbReference type="Pharos" id="Q96DR8">
    <property type="development level" value="Tbio"/>
</dbReference>
<dbReference type="PRO" id="PR:Q96DR8"/>
<dbReference type="Proteomes" id="UP000005640">
    <property type="component" value="Chromosome 12"/>
</dbReference>
<dbReference type="RNAct" id="Q96DR8">
    <property type="molecule type" value="protein"/>
</dbReference>
<dbReference type="Bgee" id="ENSG00000172551">
    <property type="expression patterns" value="Expressed in upper leg skin and 97 other cell types or tissues"/>
</dbReference>
<dbReference type="ExpressionAtlas" id="Q96DR8">
    <property type="expression patterns" value="baseline and differential"/>
</dbReference>
<dbReference type="GO" id="GO:0005576">
    <property type="term" value="C:extracellular region"/>
    <property type="evidence" value="ECO:0007669"/>
    <property type="project" value="UniProtKB-SubCell"/>
</dbReference>
<dbReference type="GO" id="GO:0005796">
    <property type="term" value="C:Golgi lumen"/>
    <property type="evidence" value="ECO:0000304"/>
    <property type="project" value="Reactome"/>
</dbReference>
<dbReference type="GO" id="GO:0005886">
    <property type="term" value="C:plasma membrane"/>
    <property type="evidence" value="ECO:0000304"/>
    <property type="project" value="Reactome"/>
</dbReference>
<dbReference type="InterPro" id="IPR054050">
    <property type="entry name" value="MUCL1"/>
</dbReference>
<dbReference type="Pfam" id="PF21823">
    <property type="entry name" value="MUCL1"/>
    <property type="match status" value="1"/>
</dbReference>
<gene>
    <name type="primary">MUCL1</name>
    <name type="synonym">SBEM</name>
    <name type="ORF">UNQ590/PRO1160</name>
</gene>
<evidence type="ECO:0000255" key="1"/>
<evidence type="ECO:0000256" key="2">
    <source>
        <dbReference type="SAM" id="MobiDB-lite"/>
    </source>
</evidence>
<evidence type="ECO:0000269" key="3">
    <source>
    </source>
</evidence>
<evidence type="ECO:0000269" key="4">
    <source>
    </source>
</evidence>
<evidence type="ECO:0000269" key="5">
    <source>
    </source>
</evidence>
<evidence type="ECO:0000269" key="6">
    <source>
    </source>
</evidence>
<evidence type="ECO:0000269" key="7">
    <source>
    </source>
</evidence>
<evidence type="ECO:0000269" key="8">
    <source>
    </source>
</evidence>
<evidence type="ECO:0000305" key="9">
    <source>
    </source>
</evidence>
<evidence type="ECO:0000305" key="10">
    <source>
    </source>
</evidence>
<name>MUCL1_HUMAN</name>
<feature type="signal peptide" evidence="6">
    <location>
        <begin position="1"/>
        <end position="20"/>
    </location>
</feature>
<feature type="chain" id="PRO_0000228159" description="Mucin-like protein 1">
    <location>
        <begin position="21"/>
        <end position="90"/>
    </location>
</feature>
<feature type="repeat" description="1">
    <location>
        <begin position="46"/>
        <end position="53"/>
    </location>
</feature>
<feature type="repeat" description="2">
    <location>
        <begin position="54"/>
        <end position="61"/>
    </location>
</feature>
<feature type="repeat" description="3">
    <location>
        <begin position="62"/>
        <end position="69"/>
    </location>
</feature>
<feature type="region of interest" description="Disordered" evidence="2">
    <location>
        <begin position="25"/>
        <end position="68"/>
    </location>
</feature>
<feature type="region of interest" description="3 X 8 AA tandem repeat of T-T-A-A-[APS]-T-T-A">
    <location>
        <begin position="46"/>
        <end position="69"/>
    </location>
</feature>
<feature type="compositionally biased region" description="Low complexity" evidence="2">
    <location>
        <begin position="25"/>
        <end position="36"/>
    </location>
</feature>
<feature type="compositionally biased region" description="Low complexity" evidence="2">
    <location>
        <begin position="44"/>
        <end position="68"/>
    </location>
</feature>
<feature type="glycosylation site" description="O-linked (GalNAc...) threonine" evidence="1">
    <location>
        <position position="23"/>
    </location>
</feature>
<feature type="glycosylation site" description="O-linked (GalNAc...) threonine" evidence="1">
    <location>
        <position position="24"/>
    </location>
</feature>
<feature type="glycosylation site" description="O-linked (GalNAc...) threonine" evidence="1">
    <location>
        <position position="30"/>
    </location>
</feature>
<feature type="glycosylation site" description="O-linked (GalNAc...) threonine" evidence="1">
    <location>
        <position position="34"/>
    </location>
</feature>
<feature type="glycosylation site" description="O-linked (GalNAc...) threonine" evidence="1">
    <location>
        <position position="46"/>
    </location>
</feature>
<feature type="glycosylation site" description="O-linked (GalNAc...) threonine" evidence="1">
    <location>
        <position position="47"/>
    </location>
</feature>
<feature type="glycosylation site" description="O-linked (GalNAc...) threonine" evidence="1">
    <location>
        <position position="51"/>
    </location>
</feature>
<feature type="glycosylation site" description="O-linked (GalNAc...) threonine" evidence="1">
    <location>
        <position position="52"/>
    </location>
</feature>
<feature type="glycosylation site" description="O-linked (GalNAc...) threonine" evidence="1">
    <location>
        <position position="54"/>
    </location>
</feature>
<feature type="glycosylation site" description="O-linked (GalNAc...) threonine" evidence="1">
    <location>
        <position position="55"/>
    </location>
</feature>
<feature type="glycosylation site" description="O-linked (GalNAc...) threonine" evidence="1">
    <location>
        <position position="59"/>
    </location>
</feature>
<feature type="glycosylation site" description="O-linked (GalNAc...) threonine" evidence="1">
    <location>
        <position position="60"/>
    </location>
</feature>
<feature type="glycosylation site" description="O-linked (GalNAc...) threonine" evidence="1">
    <location>
        <position position="62"/>
    </location>
</feature>
<feature type="glycosylation site" description="O-linked (GalNAc...) threonine" evidence="1">
    <location>
        <position position="63"/>
    </location>
</feature>
<feature type="glycosylation site" description="O-linked (GalNAc...) serine" evidence="1">
    <location>
        <position position="66"/>
    </location>
</feature>
<feature type="glycosylation site" description="O-linked (GalNAc...) threonine" evidence="1">
    <location>
        <position position="67"/>
    </location>
</feature>
<feature type="glycosylation site" description="O-linked (GalNAc...) threonine" evidence="1">
    <location>
        <position position="68"/>
    </location>
</feature>
<feature type="sequence variant" id="VAR_025700" evidence="8">
    <location>
        <begin position="46"/>
        <end position="53"/>
    </location>
</feature>
<keyword id="KW-0903">Direct protein sequencing</keyword>
<keyword id="KW-0325">Glycoprotein</keyword>
<keyword id="KW-0472">Membrane</keyword>
<keyword id="KW-1267">Proteomics identification</keyword>
<keyword id="KW-1185">Reference proteome</keyword>
<keyword id="KW-0677">Repeat</keyword>
<keyword id="KW-0964">Secreted</keyword>
<keyword id="KW-0732">Signal</keyword>
<comment type="function">
    <text evidence="3 4 7">May play a role as marker for the diagnosis of metastatic breast cancer.</text>
</comment>
<comment type="interaction">
    <interactant intactId="EBI-9056153">
        <id>Q96DR8</id>
    </interactant>
    <interactant intactId="EBI-11343438">
        <id>Q3SXY8</id>
        <label>ARL13B</label>
    </interactant>
    <organismsDiffer>false</organismsDiffer>
    <experiments>3</experiments>
</comment>
<comment type="subcellular location">
    <subcellularLocation>
        <location evidence="10">Secreted</location>
    </subcellularLocation>
    <subcellularLocation>
        <location evidence="10">Membrane</location>
    </subcellularLocation>
</comment>
<comment type="tissue specificity">
    <text evidence="3 4 5">Expressed in mammary, salivary glands and prostate. Also detected in lung. Mainly expressed in cancer cell lines of breast origin. Highly expressed in lymph node-positive compared with node-negative tumors. Detected in all lymph node containing metastatic cells.</text>
</comment>
<comment type="PTM">
    <text evidence="9">O-glycosylated.</text>
</comment>
<comment type="polymorphism">
    <text evidence="8">The number of repeats varies from 3 to 2 in one variant form which is equally present in breast cancer tumors.</text>
</comment>
<sequence>MKFLAVLVLLGVSIFLVSAQNPTTAAPADTYPATGPADDEAPDAETTAAATTATTAAPTTATTAASTTARKDIPVLPKWVGDLPNGRVCP</sequence>
<proteinExistence type="evidence at protein level"/>
<accession>Q96DR8</accession>
<accession>Q0VG95</accession>
<accession>Q32ZB5</accession>